<organism>
    <name type="scientific">Mesorhizobium japonicum (strain LMG 29417 / CECT 9101 / MAFF 303099)</name>
    <name type="common">Mesorhizobium loti (strain MAFF 303099)</name>
    <dbReference type="NCBI Taxonomy" id="266835"/>
    <lineage>
        <taxon>Bacteria</taxon>
        <taxon>Pseudomonadati</taxon>
        <taxon>Pseudomonadota</taxon>
        <taxon>Alphaproteobacteria</taxon>
        <taxon>Hyphomicrobiales</taxon>
        <taxon>Phyllobacteriaceae</taxon>
        <taxon>Mesorhizobium</taxon>
    </lineage>
</organism>
<reference key="1">
    <citation type="journal article" date="2000" name="DNA Res.">
        <title>Complete genome structure of the nitrogen-fixing symbiotic bacterium Mesorhizobium loti.</title>
        <authorList>
            <person name="Kaneko T."/>
            <person name="Nakamura Y."/>
            <person name="Sato S."/>
            <person name="Asamizu E."/>
            <person name="Kato T."/>
            <person name="Sasamoto S."/>
            <person name="Watanabe A."/>
            <person name="Idesawa K."/>
            <person name="Ishikawa A."/>
            <person name="Kawashima K."/>
            <person name="Kimura T."/>
            <person name="Kishida Y."/>
            <person name="Kiyokawa C."/>
            <person name="Kohara M."/>
            <person name="Matsumoto M."/>
            <person name="Matsuno A."/>
            <person name="Mochizuki Y."/>
            <person name="Nakayama S."/>
            <person name="Nakazaki N."/>
            <person name="Shimpo S."/>
            <person name="Sugimoto M."/>
            <person name="Takeuchi C."/>
            <person name="Yamada M."/>
            <person name="Tabata S."/>
        </authorList>
    </citation>
    <scope>NUCLEOTIDE SEQUENCE [LARGE SCALE GENOMIC DNA]</scope>
    <source>
        <strain>LMG 29417 / CECT 9101 / MAFF 303099</strain>
    </source>
</reference>
<keyword id="KW-0687">Ribonucleoprotein</keyword>
<keyword id="KW-0689">Ribosomal protein</keyword>
<keyword id="KW-0694">RNA-binding</keyword>
<keyword id="KW-0699">rRNA-binding</keyword>
<feature type="chain" id="PRO_0000272819" description="Large ribosomal subunit protein uL23">
    <location>
        <begin position="1"/>
        <end position="97"/>
    </location>
</feature>
<accession>Q98N55</accession>
<comment type="function">
    <text evidence="1">One of the early assembly proteins it binds 23S rRNA. One of the proteins that surrounds the polypeptide exit tunnel on the outside of the ribosome. Forms the main docking site for trigger factor binding to the ribosome.</text>
</comment>
<comment type="subunit">
    <text evidence="1">Part of the 50S ribosomal subunit. Contacts protein L29, and trigger factor when it is bound to the ribosome.</text>
</comment>
<comment type="similarity">
    <text evidence="1">Belongs to the universal ribosomal protein uL23 family.</text>
</comment>
<name>RL23_RHILO</name>
<sequence length="97" mass="10486">MTDLRHYDVIVSPAITEKSTMASEQNQVVFNVAKKASKPEIKAAVEALFGVKVMAVNTLVRKGKIKRFRGTIGRQSDVKKAIVTLADGQSIDVATGL</sequence>
<protein>
    <recommendedName>
        <fullName evidence="1">Large ribosomal subunit protein uL23</fullName>
    </recommendedName>
    <alternativeName>
        <fullName evidence="2">50S ribosomal protein L23</fullName>
    </alternativeName>
</protein>
<dbReference type="EMBL" id="BA000012">
    <property type="protein sequence ID" value="BAB47908.1"/>
    <property type="molecule type" value="Genomic_DNA"/>
</dbReference>
<dbReference type="RefSeq" id="WP_010909275.1">
    <property type="nucleotide sequence ID" value="NC_002678.2"/>
</dbReference>
<dbReference type="SMR" id="Q98N55"/>
<dbReference type="KEGG" id="mlo:msr0293"/>
<dbReference type="eggNOG" id="COG0089">
    <property type="taxonomic scope" value="Bacteria"/>
</dbReference>
<dbReference type="HOGENOM" id="CLU_037562_3_1_5"/>
<dbReference type="Proteomes" id="UP000000552">
    <property type="component" value="Chromosome"/>
</dbReference>
<dbReference type="GO" id="GO:1990904">
    <property type="term" value="C:ribonucleoprotein complex"/>
    <property type="evidence" value="ECO:0007669"/>
    <property type="project" value="UniProtKB-KW"/>
</dbReference>
<dbReference type="GO" id="GO:0005840">
    <property type="term" value="C:ribosome"/>
    <property type="evidence" value="ECO:0007669"/>
    <property type="project" value="UniProtKB-KW"/>
</dbReference>
<dbReference type="GO" id="GO:0019843">
    <property type="term" value="F:rRNA binding"/>
    <property type="evidence" value="ECO:0007669"/>
    <property type="project" value="UniProtKB-UniRule"/>
</dbReference>
<dbReference type="GO" id="GO:0003735">
    <property type="term" value="F:structural constituent of ribosome"/>
    <property type="evidence" value="ECO:0007669"/>
    <property type="project" value="InterPro"/>
</dbReference>
<dbReference type="GO" id="GO:0006412">
    <property type="term" value="P:translation"/>
    <property type="evidence" value="ECO:0007669"/>
    <property type="project" value="UniProtKB-UniRule"/>
</dbReference>
<dbReference type="FunFam" id="3.30.70.330:FF:000001">
    <property type="entry name" value="50S ribosomal protein L23"/>
    <property type="match status" value="1"/>
</dbReference>
<dbReference type="Gene3D" id="3.30.70.330">
    <property type="match status" value="1"/>
</dbReference>
<dbReference type="HAMAP" id="MF_01369_B">
    <property type="entry name" value="Ribosomal_uL23_B"/>
    <property type="match status" value="1"/>
</dbReference>
<dbReference type="InterPro" id="IPR012677">
    <property type="entry name" value="Nucleotide-bd_a/b_plait_sf"/>
</dbReference>
<dbReference type="InterPro" id="IPR013025">
    <property type="entry name" value="Ribosomal_uL23-like"/>
</dbReference>
<dbReference type="InterPro" id="IPR012678">
    <property type="entry name" value="Ribosomal_uL23/eL15/eS24_sf"/>
</dbReference>
<dbReference type="NCBIfam" id="NF004359">
    <property type="entry name" value="PRK05738.1-3"/>
    <property type="match status" value="1"/>
</dbReference>
<dbReference type="NCBIfam" id="NF004360">
    <property type="entry name" value="PRK05738.1-5"/>
    <property type="match status" value="1"/>
</dbReference>
<dbReference type="NCBIfam" id="NF004363">
    <property type="entry name" value="PRK05738.2-4"/>
    <property type="match status" value="1"/>
</dbReference>
<dbReference type="PANTHER" id="PTHR11620">
    <property type="entry name" value="60S RIBOSOMAL PROTEIN L23A"/>
    <property type="match status" value="1"/>
</dbReference>
<dbReference type="Pfam" id="PF00276">
    <property type="entry name" value="Ribosomal_L23"/>
    <property type="match status" value="1"/>
</dbReference>
<dbReference type="SUPFAM" id="SSF54189">
    <property type="entry name" value="Ribosomal proteins S24e, L23 and L15e"/>
    <property type="match status" value="1"/>
</dbReference>
<evidence type="ECO:0000255" key="1">
    <source>
        <dbReference type="HAMAP-Rule" id="MF_01369"/>
    </source>
</evidence>
<evidence type="ECO:0000305" key="2"/>
<gene>
    <name evidence="1" type="primary">rplW</name>
    <name type="ordered locus">msr0293</name>
</gene>
<proteinExistence type="inferred from homology"/>